<protein>
    <recommendedName>
        <fullName evidence="1">Ribose 1,5-bisphosphate phosphokinase PhnN</fullName>
        <ecNumber evidence="1">2.7.4.23</ecNumber>
    </recommendedName>
    <alternativeName>
        <fullName evidence="1">Ribose 1,5-bisphosphokinase</fullName>
    </alternativeName>
</protein>
<evidence type="ECO:0000255" key="1">
    <source>
        <dbReference type="HAMAP-Rule" id="MF_00836"/>
    </source>
</evidence>
<accession>Q329H3</accession>
<name>PHNN_SHIDS</name>
<feature type="chain" id="PRO_0000412800" description="Ribose 1,5-bisphosphate phosphokinase PhnN">
    <location>
        <begin position="1"/>
        <end position="185"/>
    </location>
</feature>
<feature type="binding site" evidence="1">
    <location>
        <begin position="10"/>
        <end position="17"/>
    </location>
    <ligand>
        <name>ATP</name>
        <dbReference type="ChEBI" id="CHEBI:30616"/>
    </ligand>
</feature>
<proteinExistence type="inferred from homology"/>
<sequence length="185" mass="20689">MTGKLIWLMGPSGSGKDSLLAELRLREQTQLLVAHRYITRDASAGSENHIALSEQEFFTRAGQNLLALSWHANGLYYGVGVEIDLWLHAGFDVLVNGSRAHLPQARARYQSALLPICLQVSPEILRQRLENRGRENASEINARLVRAARYTPQDCHTLNNDGSLCQSVDTLLTLIHQKEKHHACL</sequence>
<reference key="1">
    <citation type="journal article" date="2005" name="Nucleic Acids Res.">
        <title>Genome dynamics and diversity of Shigella species, the etiologic agents of bacillary dysentery.</title>
        <authorList>
            <person name="Yang F."/>
            <person name="Yang J."/>
            <person name="Zhang X."/>
            <person name="Chen L."/>
            <person name="Jiang Y."/>
            <person name="Yan Y."/>
            <person name="Tang X."/>
            <person name="Wang J."/>
            <person name="Xiong Z."/>
            <person name="Dong J."/>
            <person name="Xue Y."/>
            <person name="Zhu Y."/>
            <person name="Xu X."/>
            <person name="Sun L."/>
            <person name="Chen S."/>
            <person name="Nie H."/>
            <person name="Peng J."/>
            <person name="Xu J."/>
            <person name="Wang Y."/>
            <person name="Yuan Z."/>
            <person name="Wen Y."/>
            <person name="Yao Z."/>
            <person name="Shen Y."/>
            <person name="Qiang B."/>
            <person name="Hou Y."/>
            <person name="Yu J."/>
            <person name="Jin Q."/>
        </authorList>
    </citation>
    <scope>NUCLEOTIDE SEQUENCE [LARGE SCALE GENOMIC DNA]</scope>
    <source>
        <strain>Sd197</strain>
    </source>
</reference>
<organism>
    <name type="scientific">Shigella dysenteriae serotype 1 (strain Sd197)</name>
    <dbReference type="NCBI Taxonomy" id="300267"/>
    <lineage>
        <taxon>Bacteria</taxon>
        <taxon>Pseudomonadati</taxon>
        <taxon>Pseudomonadota</taxon>
        <taxon>Gammaproteobacteria</taxon>
        <taxon>Enterobacterales</taxon>
        <taxon>Enterobacteriaceae</taxon>
        <taxon>Shigella</taxon>
    </lineage>
</organism>
<dbReference type="EC" id="2.7.4.23" evidence="1"/>
<dbReference type="EMBL" id="CP000034">
    <property type="protein sequence ID" value="ABB64032.1"/>
    <property type="molecule type" value="Genomic_DNA"/>
</dbReference>
<dbReference type="RefSeq" id="WP_000147004.1">
    <property type="nucleotide sequence ID" value="NC_007606.1"/>
</dbReference>
<dbReference type="RefSeq" id="YP_405523.1">
    <property type="nucleotide sequence ID" value="NC_007606.1"/>
</dbReference>
<dbReference type="SMR" id="Q329H3"/>
<dbReference type="STRING" id="300267.SDY_4122"/>
<dbReference type="EnsemblBacteria" id="ABB64032">
    <property type="protein sequence ID" value="ABB64032"/>
    <property type="gene ID" value="SDY_4122"/>
</dbReference>
<dbReference type="KEGG" id="sdy:SDY_4122"/>
<dbReference type="PATRIC" id="fig|300267.13.peg.4846"/>
<dbReference type="HOGENOM" id="CLU_102477_0_0_6"/>
<dbReference type="UniPathway" id="UPA00087">
    <property type="reaction ID" value="UER00175"/>
</dbReference>
<dbReference type="Proteomes" id="UP000002716">
    <property type="component" value="Chromosome"/>
</dbReference>
<dbReference type="GO" id="GO:0005524">
    <property type="term" value="F:ATP binding"/>
    <property type="evidence" value="ECO:0007669"/>
    <property type="project" value="UniProtKB-KW"/>
</dbReference>
<dbReference type="GO" id="GO:0033863">
    <property type="term" value="F:ribose 1,5-bisphosphate phosphokinase activity"/>
    <property type="evidence" value="ECO:0007669"/>
    <property type="project" value="UniProtKB-UniRule"/>
</dbReference>
<dbReference type="GO" id="GO:0006015">
    <property type="term" value="P:5-phosphoribose 1-diphosphate biosynthetic process"/>
    <property type="evidence" value="ECO:0007669"/>
    <property type="project" value="UniProtKB-UniRule"/>
</dbReference>
<dbReference type="GO" id="GO:0019634">
    <property type="term" value="P:organic phosphonate metabolic process"/>
    <property type="evidence" value="ECO:0007669"/>
    <property type="project" value="UniProtKB-UniRule"/>
</dbReference>
<dbReference type="FunFam" id="3.40.50.300:FF:000979">
    <property type="entry name" value="Ribose 1,5-bisphosphate phosphokinase PhnN"/>
    <property type="match status" value="1"/>
</dbReference>
<dbReference type="Gene3D" id="3.40.50.300">
    <property type="entry name" value="P-loop containing nucleotide triphosphate hydrolases"/>
    <property type="match status" value="1"/>
</dbReference>
<dbReference type="HAMAP" id="MF_00836">
    <property type="entry name" value="PhnN"/>
    <property type="match status" value="1"/>
</dbReference>
<dbReference type="InterPro" id="IPR008145">
    <property type="entry name" value="GK/Ca_channel_bsu"/>
</dbReference>
<dbReference type="InterPro" id="IPR027417">
    <property type="entry name" value="P-loop_NTPase"/>
</dbReference>
<dbReference type="InterPro" id="IPR012699">
    <property type="entry name" value="PhnN"/>
</dbReference>
<dbReference type="NCBIfam" id="TIGR02322">
    <property type="entry name" value="phosphon_PhnN"/>
    <property type="match status" value="1"/>
</dbReference>
<dbReference type="NCBIfam" id="NF007485">
    <property type="entry name" value="PRK10078.1"/>
    <property type="match status" value="1"/>
</dbReference>
<dbReference type="Pfam" id="PF13238">
    <property type="entry name" value="AAA_18"/>
    <property type="match status" value="1"/>
</dbReference>
<dbReference type="SMART" id="SM00072">
    <property type="entry name" value="GuKc"/>
    <property type="match status" value="1"/>
</dbReference>
<dbReference type="SUPFAM" id="SSF52540">
    <property type="entry name" value="P-loop containing nucleoside triphosphate hydrolases"/>
    <property type="match status" value="1"/>
</dbReference>
<comment type="function">
    <text evidence="1">Catalyzes the phosphorylation of ribose 1,5-bisphosphate to 5-phospho-D-ribosyl alpha-1-diphosphate (PRPP).</text>
</comment>
<comment type="catalytic activity">
    <reaction evidence="1">
        <text>alpha-D-ribose 1,5-bisphosphate + ATP = 5-phospho-alpha-D-ribose 1-diphosphate + ADP</text>
        <dbReference type="Rhea" id="RHEA:20109"/>
        <dbReference type="ChEBI" id="CHEBI:30616"/>
        <dbReference type="ChEBI" id="CHEBI:58017"/>
        <dbReference type="ChEBI" id="CHEBI:68688"/>
        <dbReference type="ChEBI" id="CHEBI:456216"/>
        <dbReference type="EC" id="2.7.4.23"/>
    </reaction>
</comment>
<comment type="pathway">
    <text evidence="1">Metabolic intermediate biosynthesis; 5-phospho-alpha-D-ribose 1-diphosphate biosynthesis; 5-phospho-alpha-D-ribose 1-diphosphate from D-ribose 5-phosphate (route II): step 3/3.</text>
</comment>
<comment type="similarity">
    <text evidence="1">Belongs to the ribose 1,5-bisphosphokinase family.</text>
</comment>
<gene>
    <name evidence="1" type="primary">phnN</name>
    <name type="ordered locus">SDY_4122</name>
</gene>
<keyword id="KW-0067">ATP-binding</keyword>
<keyword id="KW-0547">Nucleotide-binding</keyword>
<keyword id="KW-1185">Reference proteome</keyword>
<keyword id="KW-0808">Transferase</keyword>